<feature type="chain" id="PRO_1000188963" description="G/U mismatch-specific DNA glycosylase">
    <location>
        <begin position="1"/>
        <end position="168"/>
    </location>
</feature>
<evidence type="ECO:0000255" key="1">
    <source>
        <dbReference type="HAMAP-Rule" id="MF_01956"/>
    </source>
</evidence>
<comment type="function">
    <text evidence="1">Excises ethenocytosine and uracil, which can arise by alkylation or deamination of cytosine, respectively, from the corresponding mispairs with guanine in ds-DNA. It is capable of hydrolyzing the carbon-nitrogen bond between the sugar-phosphate backbone of the DNA and the mispaired base. The complementary strand guanine functions in substrate recognition. Required for DNA damage lesion repair in stationary-phase cells.</text>
</comment>
<comment type="catalytic activity">
    <reaction evidence="1">
        <text>Specifically hydrolyzes mismatched double-stranded DNA and polynucleotides, releasing free uracil.</text>
        <dbReference type="EC" id="3.2.2.28"/>
    </reaction>
</comment>
<comment type="subunit">
    <text evidence="1">Binds DNA as a monomer.</text>
</comment>
<comment type="subcellular location">
    <subcellularLocation>
        <location evidence="1">Cytoplasm</location>
    </subcellularLocation>
</comment>
<comment type="similarity">
    <text evidence="1">Belongs to the uracil-DNA glycosylase (UDG) superfamily. TDG/mug family.</text>
</comment>
<name>MUG_SALDC</name>
<proteinExistence type="inferred from homology"/>
<dbReference type="EC" id="3.2.2.28" evidence="1"/>
<dbReference type="EMBL" id="CP001144">
    <property type="protein sequence ID" value="ACH77452.1"/>
    <property type="molecule type" value="Genomic_DNA"/>
</dbReference>
<dbReference type="RefSeq" id="WP_000237777.1">
    <property type="nucleotide sequence ID" value="NC_011205.1"/>
</dbReference>
<dbReference type="SMR" id="B5FHU7"/>
<dbReference type="KEGG" id="sed:SeD_A3568"/>
<dbReference type="HOGENOM" id="CLU_042829_3_1_6"/>
<dbReference type="Proteomes" id="UP000008322">
    <property type="component" value="Chromosome"/>
</dbReference>
<dbReference type="GO" id="GO:0005737">
    <property type="term" value="C:cytoplasm"/>
    <property type="evidence" value="ECO:0007669"/>
    <property type="project" value="UniProtKB-SubCell"/>
</dbReference>
<dbReference type="GO" id="GO:0003677">
    <property type="term" value="F:DNA binding"/>
    <property type="evidence" value="ECO:0007669"/>
    <property type="project" value="UniProtKB-KW"/>
</dbReference>
<dbReference type="GO" id="GO:0008263">
    <property type="term" value="F:pyrimidine-specific mismatch base pair DNA N-glycosylase activity"/>
    <property type="evidence" value="ECO:0007669"/>
    <property type="project" value="UniProtKB-UniRule"/>
</dbReference>
<dbReference type="GO" id="GO:0004844">
    <property type="term" value="F:uracil DNA N-glycosylase activity"/>
    <property type="evidence" value="ECO:0007669"/>
    <property type="project" value="TreeGrafter"/>
</dbReference>
<dbReference type="GO" id="GO:0006285">
    <property type="term" value="P:base-excision repair, AP site formation"/>
    <property type="evidence" value="ECO:0007669"/>
    <property type="project" value="UniProtKB-UniRule"/>
</dbReference>
<dbReference type="CDD" id="cd10028">
    <property type="entry name" value="UDG-F2_TDG_MUG"/>
    <property type="match status" value="1"/>
</dbReference>
<dbReference type="Gene3D" id="3.40.470.10">
    <property type="entry name" value="Uracil-DNA glycosylase-like domain"/>
    <property type="match status" value="1"/>
</dbReference>
<dbReference type="HAMAP" id="MF_01956">
    <property type="entry name" value="MUG"/>
    <property type="match status" value="1"/>
</dbReference>
<dbReference type="InterPro" id="IPR015637">
    <property type="entry name" value="MUG/TDG"/>
</dbReference>
<dbReference type="InterPro" id="IPR023502">
    <property type="entry name" value="MUG_bact"/>
</dbReference>
<dbReference type="InterPro" id="IPR005122">
    <property type="entry name" value="Uracil-DNA_glycosylase-like"/>
</dbReference>
<dbReference type="InterPro" id="IPR036895">
    <property type="entry name" value="Uracil-DNA_glycosylase-like_sf"/>
</dbReference>
<dbReference type="NCBIfam" id="NF007570">
    <property type="entry name" value="PRK10201.1"/>
    <property type="match status" value="1"/>
</dbReference>
<dbReference type="PANTHER" id="PTHR12159">
    <property type="entry name" value="G/T AND G/U MISMATCH-SPECIFIC DNA GLYCOSYLASE"/>
    <property type="match status" value="1"/>
</dbReference>
<dbReference type="PANTHER" id="PTHR12159:SF9">
    <property type="entry name" value="G_T MISMATCH-SPECIFIC THYMINE DNA GLYCOSYLASE"/>
    <property type="match status" value="1"/>
</dbReference>
<dbReference type="Pfam" id="PF03167">
    <property type="entry name" value="UDG"/>
    <property type="match status" value="1"/>
</dbReference>
<dbReference type="SUPFAM" id="SSF52141">
    <property type="entry name" value="Uracil-DNA glycosylase-like"/>
    <property type="match status" value="1"/>
</dbReference>
<sequence>MVKDILAPGLRVVFCGINPGLSSANTGFPFAHPANRFWKVIHLAGFTDRQLKPEEAEKLLDFRCGVTKLVDRPTVQATEVKLHELRSGGRNLIEKIEDYQPAALAVLGKQAFEQGFSQRGIAWGKQKIAIGATMVWVLPNPSGLNRIKTEKLVEAYRELDQALIMSGL</sequence>
<gene>
    <name evidence="1" type="primary">mug</name>
    <name type="ordered locus">SeD_A3568</name>
</gene>
<protein>
    <recommendedName>
        <fullName evidence="1">G/U mismatch-specific DNA glycosylase</fullName>
        <ecNumber evidence="1">3.2.2.28</ecNumber>
    </recommendedName>
    <alternativeName>
        <fullName evidence="1">Double-strand-specific uracil glycosylase</fullName>
    </alternativeName>
    <alternativeName>
        <fullName evidence="1">Mismatch-specific uracil DNA-glycosylase</fullName>
        <shortName evidence="1">MUG</shortName>
    </alternativeName>
</protein>
<accession>B5FHU7</accession>
<keyword id="KW-0963">Cytoplasm</keyword>
<keyword id="KW-0227">DNA damage</keyword>
<keyword id="KW-0228">DNA excision</keyword>
<keyword id="KW-0234">DNA repair</keyword>
<keyword id="KW-0238">DNA-binding</keyword>
<keyword id="KW-0378">Hydrolase</keyword>
<organism>
    <name type="scientific">Salmonella dublin (strain CT_02021853)</name>
    <dbReference type="NCBI Taxonomy" id="439851"/>
    <lineage>
        <taxon>Bacteria</taxon>
        <taxon>Pseudomonadati</taxon>
        <taxon>Pseudomonadota</taxon>
        <taxon>Gammaproteobacteria</taxon>
        <taxon>Enterobacterales</taxon>
        <taxon>Enterobacteriaceae</taxon>
        <taxon>Salmonella</taxon>
    </lineage>
</organism>
<reference key="1">
    <citation type="journal article" date="2011" name="J. Bacteriol.">
        <title>Comparative genomics of 28 Salmonella enterica isolates: evidence for CRISPR-mediated adaptive sublineage evolution.</title>
        <authorList>
            <person name="Fricke W.F."/>
            <person name="Mammel M.K."/>
            <person name="McDermott P.F."/>
            <person name="Tartera C."/>
            <person name="White D.G."/>
            <person name="Leclerc J.E."/>
            <person name="Ravel J."/>
            <person name="Cebula T.A."/>
        </authorList>
    </citation>
    <scope>NUCLEOTIDE SEQUENCE [LARGE SCALE GENOMIC DNA]</scope>
    <source>
        <strain>CT_02021853</strain>
    </source>
</reference>